<organismHost>
    <name type="scientific">Homo sapiens</name>
    <name type="common">Human</name>
    <dbReference type="NCBI Taxonomy" id="9606"/>
</organismHost>
<gene>
    <name type="primary">N</name>
</gene>
<sequence length="391" mass="43451">MALSKVKLNDTLNKDQLLSSSKYTIQRSTGDSIDTPNYDVQKHINKLCGMLLITEDANHKFTGLIGMLYAMSRLGREDTIKILRDAGYHVKANGVDVTTHRQDINGKEMKFEVLTLASLTTEIQINIEIESRKSYKKMLKEMGEVAPEYRHDSPDCGMIILCIAALVITKLAAGDRSGLTAVIRRANNVLKNEMKRYKGLLPKDIANSFYEVFEKHPHFIDVFVHFGIAQSSTRGGSRVEGIFAGLFMNAYGAGQVMLRWGVLAKSVKNIMLGHASVQAEMEQVVEVYEYAQKLGGEAGFYHILNNPKASLLSLTQFPHFSSVVLGNAAGLGIMGEYRGTPRNQDLYDAAKAYAEQLKENGVINYSVLDLTAEELEAIKHQLNPKDNDVEL</sequence>
<organism>
    <name type="scientific">Human respiratory syncytial virus A (strain A2)</name>
    <dbReference type="NCBI Taxonomy" id="11259"/>
    <lineage>
        <taxon>Viruses</taxon>
        <taxon>Riboviria</taxon>
        <taxon>Orthornavirae</taxon>
        <taxon>Negarnaviricota</taxon>
        <taxon>Haploviricotina</taxon>
        <taxon>Monjiviricetes</taxon>
        <taxon>Mononegavirales</taxon>
        <taxon>Pneumoviridae</taxon>
        <taxon>Orthopneumovirus</taxon>
        <taxon>Orthopneumovirus hominis</taxon>
    </lineage>
</organism>
<feature type="chain" id="PRO_0000142652" description="Nucleoprotein">
    <location>
        <begin position="1"/>
        <end position="391"/>
    </location>
</feature>
<feature type="region of interest" description="Interaction with the phosphoprotein" evidence="11">
    <location>
        <begin position="31"/>
        <end position="252"/>
    </location>
</feature>
<feature type="region of interest" description="Interaction with the phosphoprotein" evidence="1">
    <location>
        <begin position="244"/>
        <end position="290"/>
    </location>
</feature>
<feature type="region of interest" description="Interaction with the phosphoprotein" evidence="1">
    <location>
        <begin position="338"/>
        <end position="364"/>
    </location>
</feature>
<feature type="modified residue" description="Phosphotyrosine" evidence="9">
    <location>
        <position position="38"/>
    </location>
</feature>
<feature type="sequence variant" description="In strain: Cold-passage attenuated.">
    <original>V</original>
    <variation>I</variation>
    <location>
        <position position="267"/>
    </location>
</feature>
<feature type="mutagenesis site" description="65% loss of transcription but no effect on replication." evidence="9">
    <original>Y</original>
    <variation>D</variation>
    <variation>F</variation>
    <location>
        <position position="23"/>
    </location>
</feature>
<feature type="mutagenesis site" description="45% loss of transcription but no effect on replication." evidence="9">
    <original>Y</original>
    <variation>D</variation>
    <variation>F</variation>
    <location>
        <position position="38"/>
    </location>
</feature>
<feature type="mutagenesis site" description="Increased transcription and 50% loss of replication." evidence="9">
    <original>Y</original>
    <variation>F</variation>
    <location>
        <position position="69"/>
    </location>
</feature>
<feature type="mutagenesis site" description="Almost complete loss of viral RNA synthesis.">
    <original>R</original>
    <variation>A</variation>
    <location>
        <position position="132"/>
    </location>
</feature>
<feature type="helix" evidence="41">
    <location>
        <begin position="3"/>
        <end position="5"/>
    </location>
</feature>
<feature type="helix" evidence="41">
    <location>
        <begin position="10"/>
        <end position="19"/>
    </location>
</feature>
<feature type="strand" evidence="36">
    <location>
        <begin position="33"/>
        <end position="35"/>
    </location>
</feature>
<feature type="helix" evidence="38">
    <location>
        <begin position="38"/>
        <end position="40"/>
    </location>
</feature>
<feature type="helix" evidence="38">
    <location>
        <begin position="41"/>
        <end position="52"/>
    </location>
</feature>
<feature type="helix" evidence="38">
    <location>
        <begin position="62"/>
        <end position="74"/>
    </location>
</feature>
<feature type="helix" evidence="38">
    <location>
        <begin position="76"/>
        <end position="85"/>
    </location>
</feature>
<feature type="strand" evidence="36">
    <location>
        <begin position="92"/>
        <end position="94"/>
    </location>
</feature>
<feature type="strand" evidence="38">
    <location>
        <begin position="97"/>
        <end position="104"/>
    </location>
</feature>
<feature type="strand" evidence="38">
    <location>
        <begin position="107"/>
        <end position="114"/>
    </location>
</feature>
<feature type="strand" evidence="38">
    <location>
        <begin position="117"/>
        <end position="119"/>
    </location>
</feature>
<feature type="helix" evidence="38">
    <location>
        <begin position="121"/>
        <end position="142"/>
    </location>
</feature>
<feature type="helix" evidence="38">
    <location>
        <begin position="147"/>
        <end position="149"/>
    </location>
</feature>
<feature type="helix" evidence="38">
    <location>
        <begin position="156"/>
        <end position="169"/>
    </location>
</feature>
<feature type="turn" evidence="38">
    <location>
        <begin position="172"/>
        <end position="174"/>
    </location>
</feature>
<feature type="helix" evidence="38">
    <location>
        <begin position="179"/>
        <end position="189"/>
    </location>
</feature>
<feature type="helix" evidence="38">
    <location>
        <begin position="191"/>
        <end position="196"/>
    </location>
</feature>
<feature type="helix" evidence="38">
    <location>
        <begin position="202"/>
        <end position="215"/>
    </location>
</feature>
<feature type="helix" evidence="38">
    <location>
        <begin position="218"/>
        <end position="230"/>
    </location>
</feature>
<feature type="strand" evidence="39">
    <location>
        <begin position="235"/>
        <end position="237"/>
    </location>
</feature>
<feature type="helix" evidence="38">
    <location>
        <begin position="238"/>
        <end position="249"/>
    </location>
</feature>
<feature type="turn" evidence="37">
    <location>
        <begin position="250"/>
        <end position="252"/>
    </location>
</feature>
<feature type="helix" evidence="41">
    <location>
        <begin position="256"/>
        <end position="266"/>
    </location>
</feature>
<feature type="helix" evidence="41">
    <location>
        <begin position="270"/>
        <end position="273"/>
    </location>
</feature>
<feature type="helix" evidence="41">
    <location>
        <begin position="275"/>
        <end position="294"/>
    </location>
</feature>
<feature type="helix" evidence="41">
    <location>
        <begin position="295"/>
        <end position="300"/>
    </location>
</feature>
<feature type="turn" evidence="41">
    <location>
        <begin position="301"/>
        <end position="305"/>
    </location>
</feature>
<feature type="helix" evidence="41">
    <location>
        <begin position="307"/>
        <end position="312"/>
    </location>
</feature>
<feature type="helix" evidence="41">
    <location>
        <begin position="318"/>
        <end position="330"/>
    </location>
</feature>
<feature type="helix" evidence="41">
    <location>
        <begin position="344"/>
        <end position="359"/>
    </location>
</feature>
<feature type="turn" evidence="41">
    <location>
        <begin position="367"/>
        <end position="369"/>
    </location>
</feature>
<feature type="helix" evidence="40">
    <location>
        <begin position="375"/>
        <end position="378"/>
    </location>
</feature>
<name>NCAP_HRSVA</name>
<dbReference type="EMBL" id="M11486">
    <property type="protein sequence ID" value="AAB59852.1"/>
    <property type="molecule type" value="Genomic_RNA"/>
</dbReference>
<dbReference type="EMBL" id="X00001">
    <property type="protein sequence ID" value="CAA24906.1"/>
    <property type="status" value="ALT_FRAME"/>
    <property type="molecule type" value="Genomic_RNA"/>
</dbReference>
<dbReference type="EMBL" id="U50362">
    <property type="protein sequence ID" value="AAB86658.1"/>
    <property type="molecule type" value="Genomic_RNA"/>
</dbReference>
<dbReference type="EMBL" id="U50363">
    <property type="protein sequence ID" value="AAB86670.1"/>
    <property type="molecule type" value="Genomic_RNA"/>
</dbReference>
<dbReference type="EMBL" id="U63644">
    <property type="protein sequence ID" value="AAC55964.1"/>
    <property type="molecule type" value="Genomic_RNA"/>
</dbReference>
<dbReference type="EMBL" id="AF035006">
    <property type="protein sequence ID" value="AAC14896.1"/>
    <property type="molecule type" value="Genomic_RNA"/>
</dbReference>
<dbReference type="PIR" id="A04026">
    <property type="entry name" value="VHNZ"/>
</dbReference>
<dbReference type="PIR" id="A23316">
    <property type="entry name" value="VHNZ1"/>
</dbReference>
<dbReference type="PDB" id="2WJ8">
    <property type="method" value="X-ray"/>
    <property type="resolution" value="3.29 A"/>
    <property type="chains" value="A/B/C/D/E/F/G/H/I/J/K/L/M/N/O/P/Q/R/S/T=1-391"/>
</dbReference>
<dbReference type="PDB" id="2YHM">
    <property type="method" value="X-ray"/>
    <property type="resolution" value="3.60 A"/>
    <property type="chains" value="A/B/C/D/E/F/G/H/I/J=1-375"/>
</dbReference>
<dbReference type="PDB" id="4BKK">
    <property type="method" value="EM"/>
    <property type="chains" value="B/C/D/E/F/G/H/I/J/K/L/M/N/O/P/Q/R/S/T/U/V/W/X=1-391"/>
</dbReference>
<dbReference type="PDB" id="4UC6">
    <property type="method" value="X-ray"/>
    <property type="resolution" value="2.10 A"/>
    <property type="chains" value="A/B=31-252"/>
</dbReference>
<dbReference type="PDB" id="4UC7">
    <property type="method" value="X-ray"/>
    <property type="resolution" value="2.45 A"/>
    <property type="chains" value="A/B=31-252"/>
</dbReference>
<dbReference type="PDB" id="4UC8">
    <property type="method" value="X-ray"/>
    <property type="resolution" value="2.00 A"/>
    <property type="chains" value="A/B=31-252"/>
</dbReference>
<dbReference type="PDB" id="4UC9">
    <property type="method" value="X-ray"/>
    <property type="resolution" value="2.40 A"/>
    <property type="chains" value="A/B/C/D=31-252"/>
</dbReference>
<dbReference type="PDB" id="4UCA">
    <property type="method" value="X-ray"/>
    <property type="resolution" value="3.22 A"/>
    <property type="chains" value="A/B=31-252"/>
</dbReference>
<dbReference type="PDB" id="4UCB">
    <property type="method" value="X-ray"/>
    <property type="resolution" value="2.79 A"/>
    <property type="chains" value="A/B=31-252"/>
</dbReference>
<dbReference type="PDB" id="4UCC">
    <property type="method" value="X-ray"/>
    <property type="resolution" value="2.05 A"/>
    <property type="chains" value="A/B=31-252"/>
</dbReference>
<dbReference type="PDB" id="4UCD">
    <property type="method" value="X-ray"/>
    <property type="resolution" value="2.66 A"/>
    <property type="chains" value="A/B=31-252"/>
</dbReference>
<dbReference type="PDB" id="4UCE">
    <property type="method" value="X-ray"/>
    <property type="resolution" value="2.95 A"/>
    <property type="chains" value="A/B=31-252"/>
</dbReference>
<dbReference type="PDB" id="6YJL">
    <property type="method" value="NMR"/>
    <property type="chains" value="A=361-391"/>
</dbReference>
<dbReference type="PDB" id="8OOU">
    <property type="method" value="EM"/>
    <property type="resolution" value="2.90 A"/>
    <property type="chains" value="A/B/C/D/E/F/G/H/I/J/K/L/M/N/O/P/Q/R/S/T=1-391"/>
</dbReference>
<dbReference type="PDB" id="8OP1">
    <property type="method" value="EM"/>
    <property type="resolution" value="3.50 A"/>
    <property type="chains" value="A/B/C/D/E=2-379"/>
</dbReference>
<dbReference type="PDB" id="8OP2">
    <property type="method" value="EM"/>
    <property type="resolution" value="2.80 A"/>
    <property type="chains" value="A/B/D/E/G/H/J/K/M/N/P/Q/S/T/c/d/g/h/k/l=1-370"/>
</dbReference>
<dbReference type="PDBsum" id="2WJ8"/>
<dbReference type="PDBsum" id="2YHM"/>
<dbReference type="PDBsum" id="4BKK"/>
<dbReference type="PDBsum" id="4UC6"/>
<dbReference type="PDBsum" id="4UC7"/>
<dbReference type="PDBsum" id="4UC8"/>
<dbReference type="PDBsum" id="4UC9"/>
<dbReference type="PDBsum" id="4UCA"/>
<dbReference type="PDBsum" id="4UCB"/>
<dbReference type="PDBsum" id="4UCC"/>
<dbReference type="PDBsum" id="4UCD"/>
<dbReference type="PDBsum" id="4UCE"/>
<dbReference type="PDBsum" id="6YJL"/>
<dbReference type="PDBsum" id="8OOU"/>
<dbReference type="PDBsum" id="8OP1"/>
<dbReference type="PDBsum" id="8OP2"/>
<dbReference type="EMDB" id="EMD-17031"/>
<dbReference type="EMDB" id="EMD-17038"/>
<dbReference type="SMR" id="P03418"/>
<dbReference type="IntAct" id="P03418">
    <property type="interactions" value="8"/>
</dbReference>
<dbReference type="BindingDB" id="P03418"/>
<dbReference type="ChEMBL" id="CHEMBL4105793"/>
<dbReference type="iPTMnet" id="P03418"/>
<dbReference type="Reactome" id="R-HSA-9820960">
    <property type="pathway name" value="Respiratory syncytial virus (RSV) attachment and entry"/>
</dbReference>
<dbReference type="Reactome" id="R-HSA-9820962">
    <property type="pathway name" value="Assembly and release of respiratory syncytial virus (RSV) virions"/>
</dbReference>
<dbReference type="Reactome" id="R-HSA-9828642">
    <property type="pathway name" value="Respiratory syncytial virus genome transcription"/>
</dbReference>
<dbReference type="Reactome" id="R-HSA-9828721">
    <property type="pathway name" value="Translation of respiratory syncytial virus mRNAs"/>
</dbReference>
<dbReference type="Reactome" id="R-HSA-9828806">
    <property type="pathway name" value="Maturation of hRSV A proteins"/>
</dbReference>
<dbReference type="Reactome" id="R-HSA-9833109">
    <property type="pathway name" value="Evasion by RSV of host interferon responses"/>
</dbReference>
<dbReference type="Reactome" id="R-HSA-9833110">
    <property type="pathway name" value="RSV-host interactions"/>
</dbReference>
<dbReference type="Reactome" id="R-HSA-9833482">
    <property type="pathway name" value="PKR-mediated signaling"/>
</dbReference>
<dbReference type="Reactome" id="R-HSA-9834752">
    <property type="pathway name" value="Respiratory syncytial virus genome replication"/>
</dbReference>
<dbReference type="CD-CODE" id="21EC1620">
    <property type="entry name" value="Inclusion body"/>
</dbReference>
<dbReference type="EvolutionaryTrace" id="P03418"/>
<dbReference type="Proteomes" id="UP000007678">
    <property type="component" value="Genome"/>
</dbReference>
<dbReference type="Proteomes" id="UP000134464">
    <property type="component" value="Genome"/>
</dbReference>
<dbReference type="Proteomes" id="UP000181145">
    <property type="component" value="Genome"/>
</dbReference>
<dbReference type="Proteomes" id="UP000181262">
    <property type="component" value="Genome"/>
</dbReference>
<dbReference type="Proteomes" id="UP000181559">
    <property type="component" value="Genome"/>
</dbReference>
<dbReference type="GO" id="GO:0019029">
    <property type="term" value="C:helical viral capsid"/>
    <property type="evidence" value="ECO:0007669"/>
    <property type="project" value="UniProtKB-KW"/>
</dbReference>
<dbReference type="GO" id="GO:0030430">
    <property type="term" value="C:host cell cytoplasm"/>
    <property type="evidence" value="ECO:0007669"/>
    <property type="project" value="UniProtKB-SubCell"/>
</dbReference>
<dbReference type="GO" id="GO:1990904">
    <property type="term" value="C:ribonucleoprotein complex"/>
    <property type="evidence" value="ECO:0007669"/>
    <property type="project" value="UniProtKB-KW"/>
</dbReference>
<dbReference type="GO" id="GO:0019028">
    <property type="term" value="C:viral capsid"/>
    <property type="evidence" value="ECO:0000304"/>
    <property type="project" value="Reactome"/>
</dbReference>
<dbReference type="GO" id="GO:0019013">
    <property type="term" value="C:viral nucleocapsid"/>
    <property type="evidence" value="ECO:0007669"/>
    <property type="project" value="UniProtKB-KW"/>
</dbReference>
<dbReference type="GO" id="GO:0030291">
    <property type="term" value="F:protein serine/threonine kinase inhibitor activity"/>
    <property type="evidence" value="ECO:0007669"/>
    <property type="project" value="UniProtKB-KW"/>
</dbReference>
<dbReference type="GO" id="GO:0003723">
    <property type="term" value="F:RNA binding"/>
    <property type="evidence" value="ECO:0007669"/>
    <property type="project" value="UniProtKB-KW"/>
</dbReference>
<dbReference type="GO" id="GO:0039545">
    <property type="term" value="P:symbiont-mediated suppression of host cytoplasmic pattern recognition receptor signaling pathway via inhibition of MAVS activity"/>
    <property type="evidence" value="ECO:0007669"/>
    <property type="project" value="UniProtKB-KW"/>
</dbReference>
<dbReference type="GO" id="GO:0039554">
    <property type="term" value="P:symbiont-mediated suppression of host cytoplasmic pattern recognition receptor signaling pathway via inhibition of MDA-5 activity"/>
    <property type="evidence" value="ECO:0007669"/>
    <property type="project" value="UniProtKB-KW"/>
</dbReference>
<dbReference type="GO" id="GO:0085034">
    <property type="term" value="P:symbiont-mediated suppression of host NF-kappaB cascade"/>
    <property type="evidence" value="ECO:0007669"/>
    <property type="project" value="UniProtKB-KW"/>
</dbReference>
<dbReference type="GO" id="GO:0039580">
    <property type="term" value="P:symbiont-mediated suppression of host PKR/eIFalpha signaling"/>
    <property type="evidence" value="ECO:0007669"/>
    <property type="project" value="UniProtKB-KW"/>
</dbReference>
<dbReference type="GO" id="GO:0039502">
    <property type="term" value="P:symbiont-mediated suppression of host type I interferon-mediated signaling pathway"/>
    <property type="evidence" value="ECO:0007669"/>
    <property type="project" value="UniProtKB-KW"/>
</dbReference>
<dbReference type="InterPro" id="IPR004930">
    <property type="entry name" value="Pneumo_ncap"/>
</dbReference>
<dbReference type="Pfam" id="PF03246">
    <property type="entry name" value="Pneumo_ncap"/>
    <property type="match status" value="1"/>
</dbReference>
<keyword id="KW-0002">3D-structure</keyword>
<keyword id="KW-0167">Capsid protein</keyword>
<keyword id="KW-1139">Helical capsid protein</keyword>
<keyword id="KW-1035">Host cytoplasm</keyword>
<keyword id="KW-0945">Host-virus interaction</keyword>
<keyword id="KW-1090">Inhibition of host innate immune response by virus</keyword>
<keyword id="KW-1114">Inhibition of host interferon signaling pathway by virus</keyword>
<keyword id="KW-1097">Inhibition of host MAVS by virus</keyword>
<keyword id="KW-1089">Inhibition of host MDA5 by virus</keyword>
<keyword id="KW-1100">Inhibition of host NF-kappa-B by virus</keyword>
<keyword id="KW-1102">Inhibition of host PKR by virus</keyword>
<keyword id="KW-1113">Inhibition of host RLR pathway by virus</keyword>
<keyword id="KW-0922">Interferon antiviral system evasion</keyword>
<keyword id="KW-0597">Phosphoprotein</keyword>
<keyword id="KW-0687">Ribonucleoprotein</keyword>
<keyword id="KW-0694">RNA-binding</keyword>
<keyword id="KW-0899">Viral immunoevasion</keyword>
<keyword id="KW-0543">Viral nucleoprotein</keyword>
<keyword id="KW-0946">Virion</keyword>
<protein>
    <recommendedName>
        <fullName>Nucleoprotein</fullName>
        <shortName>Protein N</shortName>
    </recommendedName>
    <alternativeName>
        <fullName>Nucleocapsid protein</fullName>
    </alternativeName>
</protein>
<reference key="1">
    <citation type="journal article" date="1985" name="Virology">
        <title>Correct sequence for the major nucleocapsid protein mRNA of respiratory syncytial virus.</title>
        <authorList>
            <person name="Collins P.L."/>
            <person name="Anderson K."/>
            <person name="Langer S.J."/>
            <person name="Wertz G.W."/>
        </authorList>
    </citation>
    <scope>NUCLEOTIDE SEQUENCE [GENOMIC RNA]</scope>
</reference>
<reference key="2">
    <citation type="journal article" date="1983" name="Nucleic Acids Res.">
        <title>Amino acid sequence of human respiratory syncytial virus nucleocapsid protein.</title>
        <authorList>
            <person name="Elango N."/>
            <person name="Venkatesan S."/>
        </authorList>
    </citation>
    <scope>NUCLEOTIDE SEQUENCE [GENOMIC RNA]</scope>
</reference>
<reference key="3">
    <citation type="journal article" date="1995" name="Virology">
        <title>A cold-passaged, attenuated strain of human respiratory syncytial virus contains mutations in the F and L genes.</title>
        <authorList>
            <person name="Connors M."/>
            <person name="Crowe J.E. Jr."/>
            <person name="Firestone C.Y."/>
            <person name="Murphy B.R."/>
            <person name="Collins P.L."/>
        </authorList>
    </citation>
    <scope>NUCLEOTIDE SEQUENCE [GENOMIC RNA]</scope>
    <source>
        <strain>Cold-passage attenuated</strain>
    </source>
</reference>
<reference key="4">
    <citation type="journal article" date="1996" name="Virus Genes">
        <title>Acquisition of the ts phenotype by a chemically mutagenized cold-passaged human respiratory syncytial virus vaccine candidate results from the acquisition of a single mutation in the polymerase (L) gene.</title>
        <authorList>
            <person name="Crowe J.E. Jr."/>
            <person name="Firestone C.Y."/>
            <person name="Whitehead S.S."/>
            <person name="Collins P.L."/>
            <person name="Murphy B.R."/>
        </authorList>
    </citation>
    <scope>NUCLEOTIDE SEQUENCE [GENOMIC RNA]</scope>
    <source>
        <strain>Cold-passage attenuated</strain>
    </source>
</reference>
<reference key="5">
    <citation type="journal article" date="1996" name="Virology">
        <title>Nucleotide sequence analysis of the respiratory syncytial virus subgroup A cold-passaged (cp) temperature sensitive (ts) cpts-248/404 live attenuated virus vaccine candidate.</title>
        <authorList>
            <person name="Firestone C.Y."/>
            <person name="Whitehead S.S."/>
            <person name="Collins P.L."/>
            <person name="Murphy B.R."/>
            <person name="Crowe J.E. Jr."/>
        </authorList>
    </citation>
    <scope>NUCLEOTIDE SEQUENCE [GENOMIC RNA]</scope>
    <source>
        <strain>Cold-passage attenuated</strain>
    </source>
</reference>
<reference key="6">
    <citation type="journal article" date="1998" name="J. Virol.">
        <title>Recombinant respiratory syncytial virus (RSV) bearing a set of mutations from cold-passaged RSV is attenuated in chimpanzees.</title>
        <authorList>
            <person name="Whitehead S.S."/>
            <person name="Juhasz K."/>
            <person name="Firestone C.Y."/>
            <person name="Collins P.L."/>
            <person name="Murphy B.R."/>
        </authorList>
    </citation>
    <scope>NUCLEOTIDE SEQUENCE [GENOMIC RNA]</scope>
    <source>
        <strain>Cold-passage attenuated</strain>
    </source>
</reference>
<reference key="7">
    <citation type="journal article" date="1997" name="Virology">
        <title>Increased expression of the N protein of respiratory syncytial virus stimulates minigenome replication but does not alter the balance between the synthesis of mRNA and antigenome.</title>
        <authorList>
            <person name="Fearns R."/>
            <person name="Peeples M.E."/>
            <person name="Collins P.L."/>
        </authorList>
    </citation>
    <scope>FUNCTION</scope>
</reference>
<reference key="8">
    <citation type="journal article" date="2000" name="J. Virol.">
        <title>The Cys(3)-His(1) motif of the respiratory syncytial virus M2-1 protein is essential for protein function.</title>
        <authorList>
            <person name="Hardy R.W."/>
            <person name="Wertz G.W."/>
        </authorList>
    </citation>
    <scope>INTERACTION WITH PROTEIN M2-1</scope>
</reference>
<reference key="9">
    <citation type="journal article" date="2002" name="J. Virol.">
        <title>Identification of temperature-sensitive mutations in the phosphoprotein of respiratory syncytial virus that are likely involved in its interaction with the nucleoprotein.</title>
        <authorList>
            <person name="Lu B."/>
            <person name="Brazas R."/>
            <person name="Ma C.H."/>
            <person name="Kristoff T."/>
            <person name="Cheng X."/>
            <person name="Jin H."/>
        </authorList>
    </citation>
    <scope>INTERACTION WITH THE PHOSPHOPROTEIN</scope>
</reference>
<reference key="10">
    <citation type="journal article" date="2002" name="J. Virol.">
        <title>The major phosphorylation sites of the respiratory syncytial virus phosphoprotein are dispensable for virus replication in vitro.</title>
        <authorList>
            <person name="Lu B."/>
            <person name="Ma C.H."/>
            <person name="Brazas R."/>
            <person name="Jin H."/>
        </authorList>
    </citation>
    <scope>INTERACTION WITH THE PHOSPHOPROTEIN</scope>
</reference>
<reference key="11">
    <citation type="journal article" date="2007" name="Arch. Virol.">
        <title>Intracellular localization of human respiratory syncytial virus L protein.</title>
        <authorList>
            <person name="Carromeu C."/>
            <person name="Simabuco F.M."/>
            <person name="Tamura R.E."/>
            <person name="Farinha Arcieri L.E."/>
            <person name="Ventura A.M."/>
        </authorList>
    </citation>
    <scope>SUBCELLULAR LOCATION</scope>
</reference>
<reference key="12">
    <citation type="journal article" date="2007" name="J. Gen. Virol.">
        <title>The nine C-terminal amino acids of the respiratory syncytial virus protein P are necessary and sufficient for binding to ribonucleoprotein complexes in which six ribonucleotides are contacted per N protein protomer.</title>
        <authorList>
            <person name="Tran T.L."/>
            <person name="Castagne N."/>
            <person name="Bhella D."/>
            <person name="Varela P.F."/>
            <person name="Bernard J."/>
            <person name="Chilmonczyk S."/>
            <person name="Berkenkamp S."/>
            <person name="Benhamo V."/>
            <person name="Grznarova K."/>
            <person name="Grosclaude J."/>
            <person name="Nespoulos C."/>
            <person name="Rey F.A."/>
            <person name="Eleouet J.F."/>
        </authorList>
    </citation>
    <scope>INTERACTION WITH THE PHOSPHOPROTEIN</scope>
</reference>
<reference key="13">
    <citation type="journal article" date="2010" name="J. Biol. Chem.">
        <title>Respiratory syncytial virus limits alpha subunit of eukaryotic translation initiation factor 2 (eIF2alpha) phosphorylation to maintain translation and viral replication.</title>
        <authorList>
            <person name="Groskreutz D.J."/>
            <person name="Babor E.C."/>
            <person name="Monick M.M."/>
            <person name="Varga S.M."/>
            <person name="Hunninghake G.W."/>
        </authorList>
    </citation>
    <scope>INTERACTION WITH HOST EIF2AK2</scope>
</reference>
<reference key="14">
    <citation type="journal article" date="2012" name="Virus Res.">
        <title>Phosphorylation of the human respiratory syncytial virus N protein provokes a decrease in viral RNA synthesis.</title>
        <authorList>
            <person name="Asenjo A."/>
            <person name="Cuesta I."/>
            <person name="Vivo A."/>
            <person name="Villanueva N."/>
        </authorList>
    </citation>
    <scope>PHOSPHORYLATION AT TYR-38</scope>
    <scope>MUTAGENESIS OF TYR-23; TYR-38 AND TYR-69</scope>
</reference>
<reference key="15">
    <citation type="journal article" date="2012" name="J. Virol.">
        <title>Human respiratory syncytial virus nucleoprotein and inclusion bodies antagonize the innate immune response mediated by MDA5 and MAVS.</title>
        <authorList>
            <person name="Lifland A.W."/>
            <person name="Jung J."/>
            <person name="Alonas E."/>
            <person name="Zurla C."/>
            <person name="Crowe J.E. Jr."/>
            <person name="Santangelo P.J."/>
        </authorList>
    </citation>
    <scope>FUNCTION</scope>
</reference>
<reference key="16">
    <citation type="journal article" date="2012" name="J. Virol.">
        <title>Characterization of a viral phosphoprotein binding site on the surface of the respiratory syncytial nucleoprotein.</title>
        <authorList>
            <person name="Galloux M."/>
            <person name="Tarus B."/>
            <person name="Blazevic I."/>
            <person name="Fix J."/>
            <person name="Duquerroy S."/>
            <person name="Eleouet J.F."/>
        </authorList>
    </citation>
    <scope>INTERACTION WITH THE PHOSPHOPROTEIN</scope>
    <scope>MUTAGENESIS OF ARG-132</scope>
    <scope>FUNCTION</scope>
</reference>
<reference key="17">
    <citation type="journal article" date="2014" name="Virol. J.">
        <title>Quantitative investigation of the affinity of human respiratory syncytial virus phosphoprotein C-terminus binding to nucleocapsid protein.</title>
        <authorList>
            <person name="Shapiro A.B."/>
            <person name="Gao N."/>
            <person name="O'Connell N."/>
            <person name="Hu J."/>
            <person name="Thresher J."/>
            <person name="Gu R.F."/>
            <person name="Overman R."/>
            <person name="Hardern I.M."/>
            <person name="Sproat G.G."/>
        </authorList>
    </citation>
    <scope>INTERACTION WITH THE PHOSPHOPROTEIN</scope>
</reference>
<reference key="18">
    <citation type="journal article" date="2014" name="PLoS ONE">
        <title>The eukaryotic elongation factor 1A is critical for genome replication of the paramyxovirus respiratory syncytial virus.</title>
        <authorList>
            <person name="Wei T."/>
            <person name="Li D."/>
            <person name="Marcial D."/>
            <person name="Khan M."/>
            <person name="Lin M.H."/>
            <person name="Snape N."/>
            <person name="Ghildyal R."/>
            <person name="Harrich D."/>
            <person name="Spann K."/>
        </authorList>
    </citation>
    <scope>INTERACTION WITH HOST EIF1AX</scope>
</reference>
<reference key="19">
    <citation type="journal article" date="2015" name="J. Virol.">
        <title>Identification and characterization of the binding site of the respiratory syncytial virus phosphoprotein to RNA-free nucleoprotein.</title>
        <authorList>
            <person name="Galloux M."/>
            <person name="Gabiane G."/>
            <person name="Sourimant J."/>
            <person name="Richard C.A."/>
            <person name="England P."/>
            <person name="Moudjou M."/>
            <person name="Aumont-Nicaise M."/>
            <person name="Fix J."/>
            <person name="Rameix-Welti M.A."/>
            <person name="Eleouet J.F."/>
        </authorList>
    </citation>
    <scope>INTERACTION WITH THE PHOSPHOPROTEIN</scope>
</reference>
<reference key="20">
    <citation type="journal article" date="2016" name="Virus Res.">
        <title>Phosphorylation of the human respiratory syncytial virus P protein mediates M2-2 regulation of viral RNA synthesis, a process that involves two P proteins.</title>
        <authorList>
            <person name="Asenjo A."/>
            <person name="Villanueva N."/>
        </authorList>
    </citation>
    <scope>INTERACTION WITH THE PHOSPHOPROTEIN</scope>
</reference>
<reference key="21">
    <citation type="journal article" date="2017" name="J. Biol. Chem.">
        <title>New Insights into Structural Disorder in Human Respiratory Syncytial Virus Phosphoprotein and Implications for Binding of Protein Partners.</title>
        <authorList>
            <person name="Pereira N."/>
            <person name="Cardone C."/>
            <person name="Lassoued S."/>
            <person name="Galloux M."/>
            <person name="Fix J."/>
            <person name="Assrir N."/>
            <person name="Lescop E."/>
            <person name="Bontems F."/>
            <person name="Eleouet J.F."/>
            <person name="Sizun C."/>
        </authorList>
    </citation>
    <scope>INTERACTION WITH THE PHOSPHOPROTEIN</scope>
</reference>
<reference key="22">
    <citation type="journal article" date="2019" name="J. Biol. Chem.">
        <title>Biochemical characterization of the respiratory syncytial virus N0-P complex in solution.</title>
        <authorList>
            <person name="Esneau C."/>
            <person name="Raynal B."/>
            <person name="Roblin P."/>
            <person name="Brule S."/>
            <person name="Richard C.A."/>
            <person name="Fix J."/>
            <person name="Eleouet J.F."/>
            <person name="Galloux M."/>
        </authorList>
    </citation>
    <scope>INTERACTION WITH THE PHOSPHOPROTEIN</scope>
</reference>
<reference key="23">
    <citation type="journal article" date="2020" name="J. Virol.">
        <title>Respiratory syncytial virus sequesters NF-kappaB subunit p65 to cytoplasmic inclusion bodies to inhibit innate immune signalling.</title>
        <authorList>
            <person name="Jobe F."/>
            <person name="Simpson J."/>
            <person name="Hawes P."/>
            <person name="Guzman E."/>
            <person name="Bailey D."/>
        </authorList>
    </citation>
    <scope>FUNCTION</scope>
    <scope>SUBCELLULAR LOCATION</scope>
</reference>
<reference key="24">
    <citation type="journal article" date="2021" name="J. Virol.">
        <title>Depletion of TAX1BP1 Amplifies Innate Immune Responses during Respiratory Syncytial Virus Infection.</title>
        <authorList>
            <person name="Descamps D."/>
            <person name="Peres de Oliveira A."/>
            <person name="Gonnin L."/>
            <person name="Madrieres S."/>
            <person name="Fix J."/>
            <person name="Drajac C."/>
            <person name="Marquant Q."/>
            <person name="Bouguyon E."/>
            <person name="Pietralunga V."/>
            <person name="Iha H."/>
            <person name="Morais Ventura A."/>
            <person name="Tangy F."/>
            <person name="Vidalain P.O."/>
            <person name="Eleouet J.F."/>
            <person name="Galloux M."/>
        </authorList>
    </citation>
    <scope>INTERACTION WITH HOST TAX1BP1</scope>
</reference>
<reference evidence="24" key="25">
    <citation type="journal article" date="2009" name="Science">
        <title>Crystal structure of a nucleocapsid-like nucleoprotein-RNA complex of respiratory syncytial virus.</title>
        <authorList>
            <person name="Tawar R.G."/>
            <person name="Duquerroy S."/>
            <person name="Vonrhein C."/>
            <person name="Varela P.F."/>
            <person name="Damier-Piolle L."/>
            <person name="Castagne N."/>
            <person name="MacLellan K."/>
            <person name="Bedouelle H."/>
            <person name="Bricogne G."/>
            <person name="Bhella D."/>
            <person name="Eleouet J.F."/>
            <person name="Rey F.A."/>
        </authorList>
    </citation>
    <scope>X-RAY CRYSTALLOGRAPHY (3.29 ANGSTROMS)</scope>
    <scope>FUNCTION</scope>
    <scope>SUBUNIT</scope>
</reference>
<reference evidence="25" key="26">
    <citation type="journal article" date="2011" name="Acta Crystallogr. F Struct. Biol. Commun.">
        <title>Structures of respiratory syncytial virus nucleocapsid protein from two crystal forms: details of potential packing interactions in the native helical form.</title>
        <authorList>
            <person name="El Omari K."/>
            <person name="Dhaliwal B."/>
            <person name="Ren J."/>
            <person name="Abrescia N.G."/>
            <person name="Lockyer M."/>
            <person name="Powell K.L."/>
            <person name="Hawkins A.R."/>
            <person name="Stammers D.K."/>
        </authorList>
    </citation>
    <scope>X-RAY CRYSTALLOGRAPHY (3.60 ANGSTROMS) OF 1-375</scope>
</reference>
<reference evidence="26" key="27">
    <citation type="journal article" date="2013" name="J. Gen. Virol.">
        <title>The respiratory syncytial virus nucleoprotein-RNA complex forms a left-handed helical nucleocapsid.</title>
        <authorList>
            <person name="Bakker S.E."/>
            <person name="Duquerroy S."/>
            <person name="Galloux M."/>
            <person name="Loney C."/>
            <person name="Conner E."/>
            <person name="Eleouet J.F."/>
            <person name="Rey F.A."/>
            <person name="Bhella D."/>
        </authorList>
    </citation>
    <scope>STRUCTURE BY NMR</scope>
    <scope>FUNCTION</scope>
    <scope>SUBUNIT</scope>
</reference>
<reference evidence="27 28 29 30 31 32 33 34 35" key="28">
    <citation type="journal article" date="2015" name="J. Virol.">
        <title>A Druggable Pocket at the Nucleocapsid/Phosphoprotein Interaction Site of Human Respiratory Syncytial Virus.</title>
        <authorList>
            <person name="Ouizougun-Oubari M."/>
            <person name="Pereira N."/>
            <person name="Tarus B."/>
            <person name="Galloux M."/>
            <person name="Lassoued S."/>
            <person name="Fix J."/>
            <person name="Tortorici M.A."/>
            <person name="Hoos S."/>
            <person name="Baron B."/>
            <person name="England P."/>
            <person name="Desmaele D."/>
            <person name="Couvreur P."/>
            <person name="Bontems F."/>
            <person name="Rey F.A."/>
            <person name="Eleouet J.F."/>
            <person name="Sizun C."/>
            <person name="Slama-Schwok A."/>
            <person name="Duquerroy S."/>
        </authorList>
    </citation>
    <scope>X-RAY CRYSTALLOGRAPHY (2.00 ANGSTROMS) OF 31-252</scope>
</reference>
<reference key="29">
    <citation type="journal article" date="2019" name="Arch. Biochem. Biophys.">
        <title>A conformational switch balances viral RNA accessibility and protection in a nucleocapsid ring model.</title>
        <authorList>
            <person name="Alvarez Paggi D."/>
            <person name="Esperante S.A."/>
            <person name="Salgueiro M."/>
            <person name="Camporeale G."/>
            <person name="de Oliveira G.A.P."/>
            <person name="Prat Gay G."/>
        </authorList>
    </citation>
    <scope>RNA-BINDING</scope>
    <scope>FUNCTION</scope>
</reference>
<proteinExistence type="evidence at protein level"/>
<comment type="function">
    <text evidence="7 10 11 12 19 20 22">Encapsidates the viral RNA genome by forming a left-handed helical nucleocapsid that protects the RNA from nucleases (PubMed:19965480, PubMed:23677789, PubMed:31229488). RNA replication depends on the availability of soluble nucleoprotein (PubMed:22623798, PubMed:9299631). The encapsidated genomic RNA is termed the NC and serves as template for transcription and replication (PubMed:22623798). Together with the phosphoprotein, sequesters host NF-kappa-B in inclusion bodies (IBs) thereby inhibiting this host defense pathway (PubMed:32878896). May also act as a modulator of the innate immune response by sequestration of host IFIH1/MDA5 and MAVS into IBs (PubMed:22623778).</text>
</comment>
<comment type="subunit">
    <text evidence="1 2 3 4 5 7 8 11 12 13 14 15 16 17 18 21">Homomultimerizes to form the nucleocapsid (PubMed:19965480, PubMed:23677789). Binds to viral genomic RNA. Interacts (via N-terminus) with the phosphoprotein P (via C-terminus); the phosphorylated phosphoprotein P binds to N-RNA complex (PubMed:11861854, PubMed:12368320, PubMed:17170452, PubMed:22623798, PubMed:25407889, PubMed:26474524, PubMed:28031463). When in a monomeric RNA-free form, interacts with the phosphoprotein (via N-terminus) (PubMed:25568210, PubMed:30626736). Interacts with protein M2-1; this interaction allows the association of nucleocapsid with the matrix protein (PubMed:10846068). Interacts with host EIF2AK2/PKR; this interaction inhibits EIF2AK2 phosphorylation of EIF2S1 and blocks EIF2AK2-mediated translation shutoff (PubMed:20519500). Interacts with host EIF1AX; this interaction recruits EIF1AX to the viral replication complex to facilitate viral genomic RNA synthesis and virus production (PubMed:25479059). Interacts with host NF-kappa-B; this interaction sequesters NF-kappa-B in inclusion bodies (By similarity). Interacts with host TAX1BP1; this interaction may promote viral growth by inhibiting the innate immune response (PubMed:34431698).</text>
</comment>
<comment type="interaction">
    <interactant intactId="EBI-6930799">
        <id>P03418</id>
    </interactant>
    <interactant intactId="EBI-351098">
        <id>O14744</id>
        <label>PRMT5</label>
    </interactant>
    <organismsDiffer>true</organismsDiffer>
    <experiments>2</experiments>
</comment>
<comment type="interaction">
    <interactant intactId="EBI-6930799">
        <id>P03418</id>
    </interactant>
    <interactant intactId="EBI-1237307">
        <id>Q9BQA1</id>
        <label>WDR77</label>
    </interactant>
    <organismsDiffer>true</organismsDiffer>
    <experiments>3</experiments>
</comment>
<comment type="subcellular location">
    <subcellularLocation>
        <location evidence="23">Virion</location>
    </subcellularLocation>
    <subcellularLocation>
        <location evidence="6 20">Host cytoplasm</location>
    </subcellularLocation>
    <text evidence="6 20">Localizes in cytoplasmic inclusion bodies.</text>
</comment>
<comment type="PTM">
    <text evidence="9">Tyrosine phosphorylation modulates viral transcription and replication.</text>
</comment>
<comment type="similarity">
    <text evidence="23">Belongs to the paramyxoviruses nucleocapsid family.</text>
</comment>
<comment type="sequence caution" evidence="23">
    <conflict type="frameshift">
        <sequence resource="EMBL-CDS" id="CAA24906"/>
    </conflict>
</comment>
<accession>P03418</accession>
<accession>P88810</accession>
<evidence type="ECO:0000250" key="1">
    <source>
        <dbReference type="UniProtKB" id="P22677"/>
    </source>
</evidence>
<evidence type="ECO:0000269" key="2">
    <source>
    </source>
</evidence>
<evidence type="ECO:0000269" key="3">
    <source>
    </source>
</evidence>
<evidence type="ECO:0000269" key="4">
    <source>
    </source>
</evidence>
<evidence type="ECO:0000269" key="5">
    <source>
    </source>
</evidence>
<evidence type="ECO:0000269" key="6">
    <source>
    </source>
</evidence>
<evidence type="ECO:0000269" key="7">
    <source>
    </source>
</evidence>
<evidence type="ECO:0000269" key="8">
    <source>
    </source>
</evidence>
<evidence type="ECO:0000269" key="9">
    <source>
    </source>
</evidence>
<evidence type="ECO:0000269" key="10">
    <source>
    </source>
</evidence>
<evidence type="ECO:0000269" key="11">
    <source>
    </source>
</evidence>
<evidence type="ECO:0000269" key="12">
    <source>
    </source>
</evidence>
<evidence type="ECO:0000269" key="13">
    <source>
    </source>
</evidence>
<evidence type="ECO:0000269" key="14">
    <source>
    </source>
</evidence>
<evidence type="ECO:0000269" key="15">
    <source>
    </source>
</evidence>
<evidence type="ECO:0000269" key="16">
    <source>
    </source>
</evidence>
<evidence type="ECO:0000269" key="17">
    <source>
    </source>
</evidence>
<evidence type="ECO:0000269" key="18">
    <source>
    </source>
</evidence>
<evidence type="ECO:0000269" key="19">
    <source>
    </source>
</evidence>
<evidence type="ECO:0000269" key="20">
    <source>
    </source>
</evidence>
<evidence type="ECO:0000269" key="21">
    <source>
    </source>
</evidence>
<evidence type="ECO:0000269" key="22">
    <source>
    </source>
</evidence>
<evidence type="ECO:0000305" key="23"/>
<evidence type="ECO:0007744" key="24">
    <source>
        <dbReference type="PDB" id="2WJ8"/>
    </source>
</evidence>
<evidence type="ECO:0007744" key="25">
    <source>
        <dbReference type="PDB" id="2YHM"/>
    </source>
</evidence>
<evidence type="ECO:0007744" key="26">
    <source>
        <dbReference type="PDB" id="4BKK"/>
    </source>
</evidence>
<evidence type="ECO:0007744" key="27">
    <source>
        <dbReference type="PDB" id="4UC6"/>
    </source>
</evidence>
<evidence type="ECO:0007744" key="28">
    <source>
        <dbReference type="PDB" id="4UC7"/>
    </source>
</evidence>
<evidence type="ECO:0007744" key="29">
    <source>
        <dbReference type="PDB" id="4UC8"/>
    </source>
</evidence>
<evidence type="ECO:0007744" key="30">
    <source>
        <dbReference type="PDB" id="4UC9"/>
    </source>
</evidence>
<evidence type="ECO:0007744" key="31">
    <source>
        <dbReference type="PDB" id="4UCA"/>
    </source>
</evidence>
<evidence type="ECO:0007744" key="32">
    <source>
        <dbReference type="PDB" id="4UCB"/>
    </source>
</evidence>
<evidence type="ECO:0007744" key="33">
    <source>
        <dbReference type="PDB" id="4UCC"/>
    </source>
</evidence>
<evidence type="ECO:0007744" key="34">
    <source>
        <dbReference type="PDB" id="4UCD"/>
    </source>
</evidence>
<evidence type="ECO:0007744" key="35">
    <source>
        <dbReference type="PDB" id="4UCE"/>
    </source>
</evidence>
<evidence type="ECO:0007829" key="36">
    <source>
        <dbReference type="PDB" id="4UC6"/>
    </source>
</evidence>
<evidence type="ECO:0007829" key="37">
    <source>
        <dbReference type="PDB" id="4UC7"/>
    </source>
</evidence>
<evidence type="ECO:0007829" key="38">
    <source>
        <dbReference type="PDB" id="4UC8"/>
    </source>
</evidence>
<evidence type="ECO:0007829" key="39">
    <source>
        <dbReference type="PDB" id="4UC9"/>
    </source>
</evidence>
<evidence type="ECO:0007829" key="40">
    <source>
        <dbReference type="PDB" id="8OOU"/>
    </source>
</evidence>
<evidence type="ECO:0007829" key="41">
    <source>
        <dbReference type="PDB" id="8OP2"/>
    </source>
</evidence>